<accession>B6EMY3</accession>
<proteinExistence type="inferred from homology"/>
<sequence length="86" mass="9475">MANSKSAKKRATQAERRRQHNASRRSMMRTYMKKTIAAIEAGDKEAATAALAIATPLLDRMATKGLIHKNKAARHKARFTAAIKAL</sequence>
<keyword id="KW-0687">Ribonucleoprotein</keyword>
<keyword id="KW-0689">Ribosomal protein</keyword>
<keyword id="KW-0694">RNA-binding</keyword>
<keyword id="KW-0699">rRNA-binding</keyword>
<evidence type="ECO:0000255" key="1">
    <source>
        <dbReference type="HAMAP-Rule" id="MF_00500"/>
    </source>
</evidence>
<evidence type="ECO:0000256" key="2">
    <source>
        <dbReference type="SAM" id="MobiDB-lite"/>
    </source>
</evidence>
<evidence type="ECO:0000305" key="3"/>
<reference key="1">
    <citation type="journal article" date="2008" name="BMC Genomics">
        <title>The genome sequence of the fish pathogen Aliivibrio salmonicida strain LFI1238 shows extensive evidence of gene decay.</title>
        <authorList>
            <person name="Hjerde E."/>
            <person name="Lorentzen M.S."/>
            <person name="Holden M.T."/>
            <person name="Seeger K."/>
            <person name="Paulsen S."/>
            <person name="Bason N."/>
            <person name="Churcher C."/>
            <person name="Harris D."/>
            <person name="Norbertczak H."/>
            <person name="Quail M.A."/>
            <person name="Sanders S."/>
            <person name="Thurston S."/>
            <person name="Parkhill J."/>
            <person name="Willassen N.P."/>
            <person name="Thomson N.R."/>
        </authorList>
    </citation>
    <scope>NUCLEOTIDE SEQUENCE [LARGE SCALE GENOMIC DNA]</scope>
    <source>
        <strain>LFI1238</strain>
    </source>
</reference>
<feature type="chain" id="PRO_1000126393" description="Small ribosomal subunit protein bS20">
    <location>
        <begin position="1"/>
        <end position="86"/>
    </location>
</feature>
<feature type="region of interest" description="Disordered" evidence="2">
    <location>
        <begin position="1"/>
        <end position="28"/>
    </location>
</feature>
<feature type="compositionally biased region" description="Basic residues" evidence="2">
    <location>
        <begin position="1"/>
        <end position="27"/>
    </location>
</feature>
<gene>
    <name evidence="1" type="primary">rpsT</name>
    <name type="ordered locus">VSAL_I0577</name>
</gene>
<comment type="function">
    <text evidence="1">Binds directly to 16S ribosomal RNA.</text>
</comment>
<comment type="similarity">
    <text evidence="1">Belongs to the bacterial ribosomal protein bS20 family.</text>
</comment>
<organism>
    <name type="scientific">Aliivibrio salmonicida (strain LFI1238)</name>
    <name type="common">Vibrio salmonicida (strain LFI1238)</name>
    <dbReference type="NCBI Taxonomy" id="316275"/>
    <lineage>
        <taxon>Bacteria</taxon>
        <taxon>Pseudomonadati</taxon>
        <taxon>Pseudomonadota</taxon>
        <taxon>Gammaproteobacteria</taxon>
        <taxon>Vibrionales</taxon>
        <taxon>Vibrionaceae</taxon>
        <taxon>Aliivibrio</taxon>
    </lineage>
</organism>
<dbReference type="EMBL" id="FM178379">
    <property type="protein sequence ID" value="CAQ78262.1"/>
    <property type="molecule type" value="Genomic_DNA"/>
</dbReference>
<dbReference type="RefSeq" id="WP_012549385.1">
    <property type="nucleotide sequence ID" value="NC_011312.1"/>
</dbReference>
<dbReference type="SMR" id="B6EMY3"/>
<dbReference type="KEGG" id="vsa:VSAL_I0577"/>
<dbReference type="eggNOG" id="COG0268">
    <property type="taxonomic scope" value="Bacteria"/>
</dbReference>
<dbReference type="HOGENOM" id="CLU_160655_4_0_6"/>
<dbReference type="Proteomes" id="UP000001730">
    <property type="component" value="Chromosome 1"/>
</dbReference>
<dbReference type="GO" id="GO:0005829">
    <property type="term" value="C:cytosol"/>
    <property type="evidence" value="ECO:0007669"/>
    <property type="project" value="TreeGrafter"/>
</dbReference>
<dbReference type="GO" id="GO:0015935">
    <property type="term" value="C:small ribosomal subunit"/>
    <property type="evidence" value="ECO:0007669"/>
    <property type="project" value="TreeGrafter"/>
</dbReference>
<dbReference type="GO" id="GO:0070181">
    <property type="term" value="F:small ribosomal subunit rRNA binding"/>
    <property type="evidence" value="ECO:0007669"/>
    <property type="project" value="TreeGrafter"/>
</dbReference>
<dbReference type="GO" id="GO:0003735">
    <property type="term" value="F:structural constituent of ribosome"/>
    <property type="evidence" value="ECO:0007669"/>
    <property type="project" value="InterPro"/>
</dbReference>
<dbReference type="GO" id="GO:0006412">
    <property type="term" value="P:translation"/>
    <property type="evidence" value="ECO:0007669"/>
    <property type="project" value="UniProtKB-UniRule"/>
</dbReference>
<dbReference type="FunFam" id="1.20.58.110:FF:000001">
    <property type="entry name" value="30S ribosomal protein S20"/>
    <property type="match status" value="1"/>
</dbReference>
<dbReference type="Gene3D" id="1.20.58.110">
    <property type="entry name" value="Ribosomal protein S20"/>
    <property type="match status" value="1"/>
</dbReference>
<dbReference type="HAMAP" id="MF_00500">
    <property type="entry name" value="Ribosomal_bS20"/>
    <property type="match status" value="1"/>
</dbReference>
<dbReference type="InterPro" id="IPR002583">
    <property type="entry name" value="Ribosomal_bS20"/>
</dbReference>
<dbReference type="InterPro" id="IPR036510">
    <property type="entry name" value="Ribosomal_bS20_sf"/>
</dbReference>
<dbReference type="NCBIfam" id="TIGR00029">
    <property type="entry name" value="S20"/>
    <property type="match status" value="1"/>
</dbReference>
<dbReference type="PANTHER" id="PTHR33398">
    <property type="entry name" value="30S RIBOSOMAL PROTEIN S20"/>
    <property type="match status" value="1"/>
</dbReference>
<dbReference type="PANTHER" id="PTHR33398:SF1">
    <property type="entry name" value="SMALL RIBOSOMAL SUBUNIT PROTEIN BS20C"/>
    <property type="match status" value="1"/>
</dbReference>
<dbReference type="Pfam" id="PF01649">
    <property type="entry name" value="Ribosomal_S20p"/>
    <property type="match status" value="1"/>
</dbReference>
<dbReference type="SUPFAM" id="SSF46992">
    <property type="entry name" value="Ribosomal protein S20"/>
    <property type="match status" value="1"/>
</dbReference>
<name>RS20_ALISL</name>
<protein>
    <recommendedName>
        <fullName evidence="1">Small ribosomal subunit protein bS20</fullName>
    </recommendedName>
    <alternativeName>
        <fullName evidence="3">30S ribosomal protein S20</fullName>
    </alternativeName>
</protein>